<sequence length="59" mass="6554">MAKLQITLTRSVIGRPETQRKTVEALGLKKTNSSVVVEDNPAIRGQINKVKHLVTVEEK</sequence>
<reference key="1">
    <citation type="journal article" date="2001" name="Lancet">
        <title>Whole genome sequencing of meticillin-resistant Staphylococcus aureus.</title>
        <authorList>
            <person name="Kuroda M."/>
            <person name="Ohta T."/>
            <person name="Uchiyama I."/>
            <person name="Baba T."/>
            <person name="Yuzawa H."/>
            <person name="Kobayashi I."/>
            <person name="Cui L."/>
            <person name="Oguchi A."/>
            <person name="Aoki K."/>
            <person name="Nagai Y."/>
            <person name="Lian J.-Q."/>
            <person name="Ito T."/>
            <person name="Kanamori M."/>
            <person name="Matsumaru H."/>
            <person name="Maruyama A."/>
            <person name="Murakami H."/>
            <person name="Hosoyama A."/>
            <person name="Mizutani-Ui Y."/>
            <person name="Takahashi N.K."/>
            <person name="Sawano T."/>
            <person name="Inoue R."/>
            <person name="Kaito C."/>
            <person name="Sekimizu K."/>
            <person name="Hirakawa H."/>
            <person name="Kuhara S."/>
            <person name="Goto S."/>
            <person name="Yabuzaki J."/>
            <person name="Kanehisa M."/>
            <person name="Yamashita A."/>
            <person name="Oshima K."/>
            <person name="Furuya K."/>
            <person name="Yoshino C."/>
            <person name="Shiba T."/>
            <person name="Hattori M."/>
            <person name="Ogasawara N."/>
            <person name="Hayashi H."/>
            <person name="Hiramatsu K."/>
        </authorList>
    </citation>
    <scope>NUCLEOTIDE SEQUENCE [LARGE SCALE GENOMIC DNA]</scope>
    <source>
        <strain>N315</strain>
    </source>
</reference>
<reference key="2">
    <citation type="submission" date="2007-10" db="UniProtKB">
        <title>Shotgun proteomic analysis of total and membrane protein extracts of S. aureus strain N315.</title>
        <authorList>
            <person name="Vaezzadeh A.R."/>
            <person name="Deshusses J."/>
            <person name="Lescuyer P."/>
            <person name="Hochstrasser D.F."/>
        </authorList>
    </citation>
    <scope>IDENTIFICATION BY MASS SPECTROMETRY [LARGE SCALE ANALYSIS]</scope>
    <source>
        <strain>N315</strain>
    </source>
</reference>
<name>RL30_STAAN</name>
<evidence type="ECO:0000255" key="1">
    <source>
        <dbReference type="HAMAP-Rule" id="MF_01371"/>
    </source>
</evidence>
<evidence type="ECO:0000305" key="2"/>
<accession>P0A0G0</accession>
<accession>O06444</accession>
<protein>
    <recommendedName>
        <fullName evidence="1">Large ribosomal subunit protein uL30</fullName>
    </recommendedName>
    <alternativeName>
        <fullName evidence="2">50S ribosomal protein L30</fullName>
    </alternativeName>
</protein>
<organism>
    <name type="scientific">Staphylococcus aureus (strain N315)</name>
    <dbReference type="NCBI Taxonomy" id="158879"/>
    <lineage>
        <taxon>Bacteria</taxon>
        <taxon>Bacillati</taxon>
        <taxon>Bacillota</taxon>
        <taxon>Bacilli</taxon>
        <taxon>Bacillales</taxon>
        <taxon>Staphylococcaceae</taxon>
        <taxon>Staphylococcus</taxon>
    </lineage>
</organism>
<proteinExistence type="evidence at protein level"/>
<keyword id="KW-0687">Ribonucleoprotein</keyword>
<keyword id="KW-0689">Ribosomal protein</keyword>
<dbReference type="EMBL" id="BA000018">
    <property type="protein sequence ID" value="BAB43324.1"/>
    <property type="molecule type" value="Genomic_DNA"/>
</dbReference>
<dbReference type="PIR" id="C90020">
    <property type="entry name" value="C90020"/>
</dbReference>
<dbReference type="RefSeq" id="WP_001096577.1">
    <property type="nucleotide sequence ID" value="NC_002745.2"/>
</dbReference>
<dbReference type="SMR" id="P0A0G0"/>
<dbReference type="EnsemblBacteria" id="BAB43324">
    <property type="protein sequence ID" value="BAB43324"/>
    <property type="gene ID" value="BAB43324"/>
</dbReference>
<dbReference type="KEGG" id="sau:SA2030"/>
<dbReference type="HOGENOM" id="CLU_131047_2_1_9"/>
<dbReference type="GO" id="GO:0022625">
    <property type="term" value="C:cytosolic large ribosomal subunit"/>
    <property type="evidence" value="ECO:0007669"/>
    <property type="project" value="TreeGrafter"/>
</dbReference>
<dbReference type="GO" id="GO:0003735">
    <property type="term" value="F:structural constituent of ribosome"/>
    <property type="evidence" value="ECO:0007669"/>
    <property type="project" value="InterPro"/>
</dbReference>
<dbReference type="GO" id="GO:0006412">
    <property type="term" value="P:translation"/>
    <property type="evidence" value="ECO:0007669"/>
    <property type="project" value="UniProtKB-UniRule"/>
</dbReference>
<dbReference type="CDD" id="cd01658">
    <property type="entry name" value="Ribosomal_L30"/>
    <property type="match status" value="1"/>
</dbReference>
<dbReference type="FunFam" id="3.30.1390.20:FF:000001">
    <property type="entry name" value="50S ribosomal protein L30"/>
    <property type="match status" value="1"/>
</dbReference>
<dbReference type="Gene3D" id="3.30.1390.20">
    <property type="entry name" value="Ribosomal protein L30, ferredoxin-like fold domain"/>
    <property type="match status" value="1"/>
</dbReference>
<dbReference type="HAMAP" id="MF_01371_B">
    <property type="entry name" value="Ribosomal_uL30_B"/>
    <property type="match status" value="1"/>
</dbReference>
<dbReference type="InterPro" id="IPR036919">
    <property type="entry name" value="Ribo_uL30_ferredoxin-like_sf"/>
</dbReference>
<dbReference type="InterPro" id="IPR005996">
    <property type="entry name" value="Ribosomal_uL30_bac-type"/>
</dbReference>
<dbReference type="InterPro" id="IPR016082">
    <property type="entry name" value="Ribosomal_uL30_ferredoxin-like"/>
</dbReference>
<dbReference type="NCBIfam" id="TIGR01308">
    <property type="entry name" value="rpmD_bact"/>
    <property type="match status" value="1"/>
</dbReference>
<dbReference type="PANTHER" id="PTHR15892:SF2">
    <property type="entry name" value="LARGE RIBOSOMAL SUBUNIT PROTEIN UL30M"/>
    <property type="match status" value="1"/>
</dbReference>
<dbReference type="PANTHER" id="PTHR15892">
    <property type="entry name" value="MITOCHONDRIAL RIBOSOMAL PROTEIN L30"/>
    <property type="match status" value="1"/>
</dbReference>
<dbReference type="Pfam" id="PF00327">
    <property type="entry name" value="Ribosomal_L30"/>
    <property type="match status" value="1"/>
</dbReference>
<dbReference type="PIRSF" id="PIRSF002211">
    <property type="entry name" value="Ribosomal_L30_bac-type"/>
    <property type="match status" value="1"/>
</dbReference>
<dbReference type="SUPFAM" id="SSF55129">
    <property type="entry name" value="Ribosomal protein L30p/L7e"/>
    <property type="match status" value="1"/>
</dbReference>
<feature type="chain" id="PRO_0000104607" description="Large ribosomal subunit protein uL30">
    <location>
        <begin position="1"/>
        <end position="59"/>
    </location>
</feature>
<gene>
    <name evidence="1" type="primary">rpmD</name>
    <name type="ordered locus">SA2030</name>
</gene>
<comment type="subunit">
    <text evidence="1">Part of the 50S ribosomal subunit.</text>
</comment>
<comment type="similarity">
    <text evidence="1">Belongs to the universal ribosomal protein uL30 family.</text>
</comment>